<organism>
    <name type="scientific">Thermosynechococcus vestitus (strain NIES-2133 / IAM M-273 / BP-1)</name>
    <dbReference type="NCBI Taxonomy" id="197221"/>
    <lineage>
        <taxon>Bacteria</taxon>
        <taxon>Bacillati</taxon>
        <taxon>Cyanobacteriota</taxon>
        <taxon>Cyanophyceae</taxon>
        <taxon>Acaryochloridales</taxon>
        <taxon>Thermosynechococcaceae</taxon>
        <taxon>Thermosynechococcus</taxon>
    </lineage>
</organism>
<name>HIS5_THEVB</name>
<accession>Q8DIP5</accession>
<feature type="chain" id="PRO_0000152433" description="Imidazole glycerol phosphate synthase subunit HisH">
    <location>
        <begin position="1"/>
        <end position="209"/>
    </location>
</feature>
<feature type="domain" description="Glutamine amidotransferase type-1" evidence="1">
    <location>
        <begin position="5"/>
        <end position="209"/>
    </location>
</feature>
<feature type="active site" description="Nucleophile" evidence="1">
    <location>
        <position position="83"/>
    </location>
</feature>
<feature type="active site" evidence="1">
    <location>
        <position position="188"/>
    </location>
</feature>
<feature type="active site" evidence="1">
    <location>
        <position position="190"/>
    </location>
</feature>
<sequence>MSAPAIAIIDYDMGNLHSVSKALEVVGARPLISDRPAEIFAADAVVLPGVGAFDPAMARLQERELVPVIEQIIEQGMPFLGICLGLQVLFECSEEGTEPGLGIFAGKVKRFQSEPGLTIPHMGWNQLTLRPSASPLWQHLPPSPWVYFVHSYFVAPEDPSLVAATVCHGQQTVTAAIARNNLFACQFHPEKSGAVGLQLLRNFVALVKD</sequence>
<keyword id="KW-0028">Amino-acid biosynthesis</keyword>
<keyword id="KW-0963">Cytoplasm</keyword>
<keyword id="KW-0315">Glutamine amidotransferase</keyword>
<keyword id="KW-0368">Histidine biosynthesis</keyword>
<keyword id="KW-0378">Hydrolase</keyword>
<keyword id="KW-0456">Lyase</keyword>
<keyword id="KW-1185">Reference proteome</keyword>
<protein>
    <recommendedName>
        <fullName evidence="1">Imidazole glycerol phosphate synthase subunit HisH</fullName>
        <ecNumber evidence="1">4.3.2.10</ecNumber>
    </recommendedName>
    <alternativeName>
        <fullName evidence="1">IGP synthase glutaminase subunit</fullName>
        <ecNumber evidence="1">3.5.1.2</ecNumber>
    </alternativeName>
    <alternativeName>
        <fullName evidence="1">IGP synthase subunit HisH</fullName>
    </alternativeName>
    <alternativeName>
        <fullName evidence="1">ImGP synthase subunit HisH</fullName>
        <shortName evidence="1">IGPS subunit HisH</shortName>
    </alternativeName>
</protein>
<dbReference type="EC" id="4.3.2.10" evidence="1"/>
<dbReference type="EC" id="3.5.1.2" evidence="1"/>
<dbReference type="EMBL" id="BA000039">
    <property type="protein sequence ID" value="BAC09088.1"/>
    <property type="molecule type" value="Genomic_DNA"/>
</dbReference>
<dbReference type="RefSeq" id="NP_682326.1">
    <property type="nucleotide sequence ID" value="NC_004113.1"/>
</dbReference>
<dbReference type="RefSeq" id="WP_011057376.1">
    <property type="nucleotide sequence ID" value="NC_004113.1"/>
</dbReference>
<dbReference type="SMR" id="Q8DIP5"/>
<dbReference type="STRING" id="197221.gene:10748136"/>
<dbReference type="EnsemblBacteria" id="BAC09088">
    <property type="protein sequence ID" value="BAC09088"/>
    <property type="gene ID" value="BAC09088"/>
</dbReference>
<dbReference type="KEGG" id="tel:tlr1536"/>
<dbReference type="PATRIC" id="fig|197221.4.peg.1612"/>
<dbReference type="eggNOG" id="COG0118">
    <property type="taxonomic scope" value="Bacteria"/>
</dbReference>
<dbReference type="UniPathway" id="UPA00031">
    <property type="reaction ID" value="UER00010"/>
</dbReference>
<dbReference type="Proteomes" id="UP000000440">
    <property type="component" value="Chromosome"/>
</dbReference>
<dbReference type="GO" id="GO:0005737">
    <property type="term" value="C:cytoplasm"/>
    <property type="evidence" value="ECO:0007669"/>
    <property type="project" value="UniProtKB-SubCell"/>
</dbReference>
<dbReference type="GO" id="GO:0004359">
    <property type="term" value="F:glutaminase activity"/>
    <property type="evidence" value="ECO:0007669"/>
    <property type="project" value="UniProtKB-EC"/>
</dbReference>
<dbReference type="GO" id="GO:0000107">
    <property type="term" value="F:imidazoleglycerol-phosphate synthase activity"/>
    <property type="evidence" value="ECO:0007669"/>
    <property type="project" value="UniProtKB-UniRule"/>
</dbReference>
<dbReference type="GO" id="GO:0016829">
    <property type="term" value="F:lyase activity"/>
    <property type="evidence" value="ECO:0007669"/>
    <property type="project" value="UniProtKB-KW"/>
</dbReference>
<dbReference type="GO" id="GO:0000105">
    <property type="term" value="P:L-histidine biosynthetic process"/>
    <property type="evidence" value="ECO:0007669"/>
    <property type="project" value="UniProtKB-UniRule"/>
</dbReference>
<dbReference type="CDD" id="cd01748">
    <property type="entry name" value="GATase1_IGP_Synthase"/>
    <property type="match status" value="1"/>
</dbReference>
<dbReference type="FunFam" id="3.40.50.880:FF:000009">
    <property type="entry name" value="Imidazole glycerol phosphate synthase subunit HisH"/>
    <property type="match status" value="1"/>
</dbReference>
<dbReference type="Gene3D" id="3.40.50.880">
    <property type="match status" value="1"/>
</dbReference>
<dbReference type="HAMAP" id="MF_00278">
    <property type="entry name" value="HisH"/>
    <property type="match status" value="1"/>
</dbReference>
<dbReference type="InterPro" id="IPR029062">
    <property type="entry name" value="Class_I_gatase-like"/>
</dbReference>
<dbReference type="InterPro" id="IPR017926">
    <property type="entry name" value="GATASE"/>
</dbReference>
<dbReference type="InterPro" id="IPR010139">
    <property type="entry name" value="Imidazole-glycPsynth_HisH"/>
</dbReference>
<dbReference type="NCBIfam" id="TIGR01855">
    <property type="entry name" value="IMP_synth_hisH"/>
    <property type="match status" value="1"/>
</dbReference>
<dbReference type="PANTHER" id="PTHR42701">
    <property type="entry name" value="IMIDAZOLE GLYCEROL PHOSPHATE SYNTHASE SUBUNIT HISH"/>
    <property type="match status" value="1"/>
</dbReference>
<dbReference type="PANTHER" id="PTHR42701:SF1">
    <property type="entry name" value="IMIDAZOLE GLYCEROL PHOSPHATE SYNTHASE SUBUNIT HISH"/>
    <property type="match status" value="1"/>
</dbReference>
<dbReference type="Pfam" id="PF00117">
    <property type="entry name" value="GATase"/>
    <property type="match status" value="1"/>
</dbReference>
<dbReference type="PIRSF" id="PIRSF000495">
    <property type="entry name" value="Amidotransf_hisH"/>
    <property type="match status" value="1"/>
</dbReference>
<dbReference type="SUPFAM" id="SSF52317">
    <property type="entry name" value="Class I glutamine amidotransferase-like"/>
    <property type="match status" value="1"/>
</dbReference>
<dbReference type="PROSITE" id="PS51273">
    <property type="entry name" value="GATASE_TYPE_1"/>
    <property type="match status" value="1"/>
</dbReference>
<gene>
    <name evidence="1" type="primary">hisH</name>
    <name type="ordered locus">tlr1536</name>
</gene>
<reference key="1">
    <citation type="journal article" date="2002" name="DNA Res.">
        <title>Complete genome structure of the thermophilic cyanobacterium Thermosynechococcus elongatus BP-1.</title>
        <authorList>
            <person name="Nakamura Y."/>
            <person name="Kaneko T."/>
            <person name="Sato S."/>
            <person name="Ikeuchi M."/>
            <person name="Katoh H."/>
            <person name="Sasamoto S."/>
            <person name="Watanabe A."/>
            <person name="Iriguchi M."/>
            <person name="Kawashima K."/>
            <person name="Kimura T."/>
            <person name="Kishida Y."/>
            <person name="Kiyokawa C."/>
            <person name="Kohara M."/>
            <person name="Matsumoto M."/>
            <person name="Matsuno A."/>
            <person name="Nakazaki N."/>
            <person name="Shimpo S."/>
            <person name="Sugimoto M."/>
            <person name="Takeuchi C."/>
            <person name="Yamada M."/>
            <person name="Tabata S."/>
        </authorList>
    </citation>
    <scope>NUCLEOTIDE SEQUENCE [LARGE SCALE GENOMIC DNA]</scope>
    <source>
        <strain>NIES-2133 / IAM M-273 / BP-1</strain>
    </source>
</reference>
<proteinExistence type="inferred from homology"/>
<comment type="function">
    <text evidence="1">IGPS catalyzes the conversion of PRFAR and glutamine to IGP, AICAR and glutamate. The HisH subunit catalyzes the hydrolysis of glutamine to glutamate and ammonia as part of the synthesis of IGP and AICAR. The resulting ammonia molecule is channeled to the active site of HisF.</text>
</comment>
<comment type="catalytic activity">
    <reaction evidence="1">
        <text>5-[(5-phospho-1-deoxy-D-ribulos-1-ylimino)methylamino]-1-(5-phospho-beta-D-ribosyl)imidazole-4-carboxamide + L-glutamine = D-erythro-1-(imidazol-4-yl)glycerol 3-phosphate + 5-amino-1-(5-phospho-beta-D-ribosyl)imidazole-4-carboxamide + L-glutamate + H(+)</text>
        <dbReference type="Rhea" id="RHEA:24793"/>
        <dbReference type="ChEBI" id="CHEBI:15378"/>
        <dbReference type="ChEBI" id="CHEBI:29985"/>
        <dbReference type="ChEBI" id="CHEBI:58278"/>
        <dbReference type="ChEBI" id="CHEBI:58359"/>
        <dbReference type="ChEBI" id="CHEBI:58475"/>
        <dbReference type="ChEBI" id="CHEBI:58525"/>
        <dbReference type="EC" id="4.3.2.10"/>
    </reaction>
</comment>
<comment type="catalytic activity">
    <reaction evidence="1">
        <text>L-glutamine + H2O = L-glutamate + NH4(+)</text>
        <dbReference type="Rhea" id="RHEA:15889"/>
        <dbReference type="ChEBI" id="CHEBI:15377"/>
        <dbReference type="ChEBI" id="CHEBI:28938"/>
        <dbReference type="ChEBI" id="CHEBI:29985"/>
        <dbReference type="ChEBI" id="CHEBI:58359"/>
        <dbReference type="EC" id="3.5.1.2"/>
    </reaction>
</comment>
<comment type="pathway">
    <text evidence="1">Amino-acid biosynthesis; L-histidine biosynthesis; L-histidine from 5-phospho-alpha-D-ribose 1-diphosphate: step 5/9.</text>
</comment>
<comment type="subunit">
    <text evidence="1">Heterodimer of HisH and HisF.</text>
</comment>
<comment type="subcellular location">
    <subcellularLocation>
        <location evidence="1">Cytoplasm</location>
    </subcellularLocation>
</comment>
<evidence type="ECO:0000255" key="1">
    <source>
        <dbReference type="HAMAP-Rule" id="MF_00278"/>
    </source>
</evidence>